<protein>
    <recommendedName>
        <fullName evidence="1">Homoserine kinase</fullName>
        <shortName evidence="1">HK</shortName>
        <shortName evidence="1">HSK</shortName>
        <ecNumber evidence="1">2.7.1.39</ecNumber>
    </recommendedName>
</protein>
<dbReference type="EC" id="2.7.1.39" evidence="1"/>
<dbReference type="EMBL" id="AE005174">
    <property type="protein sequence ID" value="AAG54303.1"/>
    <property type="molecule type" value="Genomic_DNA"/>
</dbReference>
<dbReference type="EMBL" id="BA000007">
    <property type="protein sequence ID" value="BAB33426.1"/>
    <property type="molecule type" value="Genomic_DNA"/>
</dbReference>
<dbReference type="PIR" id="C85480">
    <property type="entry name" value="C85480"/>
</dbReference>
<dbReference type="PIR" id="C90629">
    <property type="entry name" value="C90629"/>
</dbReference>
<dbReference type="RefSeq" id="NP_308030.1">
    <property type="nucleotide sequence ID" value="NC_002695.1"/>
</dbReference>
<dbReference type="RefSeq" id="WP_000241671.1">
    <property type="nucleotide sequence ID" value="NZ_VOAI01000002.1"/>
</dbReference>
<dbReference type="SMR" id="Q8XA82"/>
<dbReference type="STRING" id="155864.Z0003"/>
<dbReference type="GeneID" id="913390"/>
<dbReference type="KEGG" id="ece:Z0003"/>
<dbReference type="KEGG" id="ecs:ECs_0003"/>
<dbReference type="PATRIC" id="fig|386585.9.peg.100"/>
<dbReference type="eggNOG" id="COG0083">
    <property type="taxonomic scope" value="Bacteria"/>
</dbReference>
<dbReference type="HOGENOM" id="CLU_041243_1_1_6"/>
<dbReference type="OMA" id="CANRIPH"/>
<dbReference type="UniPathway" id="UPA00050">
    <property type="reaction ID" value="UER00064"/>
</dbReference>
<dbReference type="Proteomes" id="UP000000558">
    <property type="component" value="Chromosome"/>
</dbReference>
<dbReference type="Proteomes" id="UP000002519">
    <property type="component" value="Chromosome"/>
</dbReference>
<dbReference type="GO" id="GO:0005737">
    <property type="term" value="C:cytoplasm"/>
    <property type="evidence" value="ECO:0007669"/>
    <property type="project" value="UniProtKB-SubCell"/>
</dbReference>
<dbReference type="GO" id="GO:0005524">
    <property type="term" value="F:ATP binding"/>
    <property type="evidence" value="ECO:0007669"/>
    <property type="project" value="UniProtKB-UniRule"/>
</dbReference>
<dbReference type="GO" id="GO:0004413">
    <property type="term" value="F:homoserine kinase activity"/>
    <property type="evidence" value="ECO:0007669"/>
    <property type="project" value="UniProtKB-UniRule"/>
</dbReference>
<dbReference type="GO" id="GO:0009088">
    <property type="term" value="P:threonine biosynthetic process"/>
    <property type="evidence" value="ECO:0007669"/>
    <property type="project" value="UniProtKB-UniRule"/>
</dbReference>
<dbReference type="FunFam" id="3.30.230.10:FF:000020">
    <property type="entry name" value="Homoserine kinase"/>
    <property type="match status" value="1"/>
</dbReference>
<dbReference type="FunFam" id="3.30.70.890:FF:000002">
    <property type="entry name" value="Homoserine kinase"/>
    <property type="match status" value="1"/>
</dbReference>
<dbReference type="Gene3D" id="3.30.230.10">
    <property type="match status" value="1"/>
</dbReference>
<dbReference type="Gene3D" id="3.30.70.890">
    <property type="entry name" value="GHMP kinase, C-terminal domain"/>
    <property type="match status" value="1"/>
</dbReference>
<dbReference type="HAMAP" id="MF_00384">
    <property type="entry name" value="Homoser_kinase"/>
    <property type="match status" value="1"/>
</dbReference>
<dbReference type="InterPro" id="IPR013750">
    <property type="entry name" value="GHMP_kinase_C_dom"/>
</dbReference>
<dbReference type="InterPro" id="IPR036554">
    <property type="entry name" value="GHMP_kinase_C_sf"/>
</dbReference>
<dbReference type="InterPro" id="IPR006204">
    <property type="entry name" value="GHMP_kinase_N_dom"/>
</dbReference>
<dbReference type="InterPro" id="IPR006203">
    <property type="entry name" value="GHMP_knse_ATP-bd_CS"/>
</dbReference>
<dbReference type="InterPro" id="IPR000870">
    <property type="entry name" value="Homoserine_kinase"/>
</dbReference>
<dbReference type="InterPro" id="IPR020568">
    <property type="entry name" value="Ribosomal_Su5_D2-typ_SF"/>
</dbReference>
<dbReference type="InterPro" id="IPR014721">
    <property type="entry name" value="Ribsml_uS5_D2-typ_fold_subgr"/>
</dbReference>
<dbReference type="NCBIfam" id="NF002288">
    <property type="entry name" value="PRK01212.1-4"/>
    <property type="match status" value="1"/>
</dbReference>
<dbReference type="NCBIfam" id="TIGR00191">
    <property type="entry name" value="thrB"/>
    <property type="match status" value="1"/>
</dbReference>
<dbReference type="PANTHER" id="PTHR20861:SF1">
    <property type="entry name" value="HOMOSERINE KINASE"/>
    <property type="match status" value="1"/>
</dbReference>
<dbReference type="PANTHER" id="PTHR20861">
    <property type="entry name" value="HOMOSERINE/4-DIPHOSPHOCYTIDYL-2-C-METHYL-D-ERYTHRITOL KINASE"/>
    <property type="match status" value="1"/>
</dbReference>
<dbReference type="Pfam" id="PF08544">
    <property type="entry name" value="GHMP_kinases_C"/>
    <property type="match status" value="1"/>
</dbReference>
<dbReference type="Pfam" id="PF00288">
    <property type="entry name" value="GHMP_kinases_N"/>
    <property type="match status" value="1"/>
</dbReference>
<dbReference type="PIRSF" id="PIRSF000676">
    <property type="entry name" value="Homoser_kin"/>
    <property type="match status" value="1"/>
</dbReference>
<dbReference type="PRINTS" id="PR00958">
    <property type="entry name" value="HOMSERKINASE"/>
</dbReference>
<dbReference type="SUPFAM" id="SSF55060">
    <property type="entry name" value="GHMP Kinase, C-terminal domain"/>
    <property type="match status" value="1"/>
</dbReference>
<dbReference type="SUPFAM" id="SSF54211">
    <property type="entry name" value="Ribosomal protein S5 domain 2-like"/>
    <property type="match status" value="1"/>
</dbReference>
<dbReference type="PROSITE" id="PS00627">
    <property type="entry name" value="GHMP_KINASES_ATP"/>
    <property type="match status" value="1"/>
</dbReference>
<accession>Q8XA82</accession>
<evidence type="ECO:0000255" key="1">
    <source>
        <dbReference type="HAMAP-Rule" id="MF_00384"/>
    </source>
</evidence>
<keyword id="KW-0028">Amino-acid biosynthesis</keyword>
<keyword id="KW-0067">ATP-binding</keyword>
<keyword id="KW-0963">Cytoplasm</keyword>
<keyword id="KW-0418">Kinase</keyword>
<keyword id="KW-0547">Nucleotide-binding</keyword>
<keyword id="KW-1185">Reference proteome</keyword>
<keyword id="KW-0791">Threonine biosynthesis</keyword>
<keyword id="KW-0808">Transferase</keyword>
<proteinExistence type="inferred from homology"/>
<reference key="1">
    <citation type="journal article" date="2001" name="Nature">
        <title>Genome sequence of enterohaemorrhagic Escherichia coli O157:H7.</title>
        <authorList>
            <person name="Perna N.T."/>
            <person name="Plunkett G. III"/>
            <person name="Burland V."/>
            <person name="Mau B."/>
            <person name="Glasner J.D."/>
            <person name="Rose D.J."/>
            <person name="Mayhew G.F."/>
            <person name="Evans P.S."/>
            <person name="Gregor J."/>
            <person name="Kirkpatrick H.A."/>
            <person name="Posfai G."/>
            <person name="Hackett J."/>
            <person name="Klink S."/>
            <person name="Boutin A."/>
            <person name="Shao Y."/>
            <person name="Miller L."/>
            <person name="Grotbeck E.J."/>
            <person name="Davis N.W."/>
            <person name="Lim A."/>
            <person name="Dimalanta E.T."/>
            <person name="Potamousis K."/>
            <person name="Apodaca J."/>
            <person name="Anantharaman T.S."/>
            <person name="Lin J."/>
            <person name="Yen G."/>
            <person name="Schwartz D.C."/>
            <person name="Welch R.A."/>
            <person name="Blattner F.R."/>
        </authorList>
    </citation>
    <scope>NUCLEOTIDE SEQUENCE [LARGE SCALE GENOMIC DNA]</scope>
    <source>
        <strain>O157:H7 / EDL933 / ATCC 700927 / EHEC</strain>
    </source>
</reference>
<reference key="2">
    <citation type="journal article" date="2001" name="DNA Res.">
        <title>Complete genome sequence of enterohemorrhagic Escherichia coli O157:H7 and genomic comparison with a laboratory strain K-12.</title>
        <authorList>
            <person name="Hayashi T."/>
            <person name="Makino K."/>
            <person name="Ohnishi M."/>
            <person name="Kurokawa K."/>
            <person name="Ishii K."/>
            <person name="Yokoyama K."/>
            <person name="Han C.-G."/>
            <person name="Ohtsubo E."/>
            <person name="Nakayama K."/>
            <person name="Murata T."/>
            <person name="Tanaka M."/>
            <person name="Tobe T."/>
            <person name="Iida T."/>
            <person name="Takami H."/>
            <person name="Honda T."/>
            <person name="Sasakawa C."/>
            <person name="Ogasawara N."/>
            <person name="Yasunaga T."/>
            <person name="Kuhara S."/>
            <person name="Shiba T."/>
            <person name="Hattori M."/>
            <person name="Shinagawa H."/>
        </authorList>
    </citation>
    <scope>NUCLEOTIDE SEQUENCE [LARGE SCALE GENOMIC DNA]</scope>
    <source>
        <strain>O157:H7 / Sakai / RIMD 0509952 / EHEC</strain>
    </source>
</reference>
<organism>
    <name type="scientific">Escherichia coli O157:H7</name>
    <dbReference type="NCBI Taxonomy" id="83334"/>
    <lineage>
        <taxon>Bacteria</taxon>
        <taxon>Pseudomonadati</taxon>
        <taxon>Pseudomonadota</taxon>
        <taxon>Gammaproteobacteria</taxon>
        <taxon>Enterobacterales</taxon>
        <taxon>Enterobacteriaceae</taxon>
        <taxon>Escherichia</taxon>
    </lineage>
</organism>
<feature type="chain" id="PRO_0000156569" description="Homoserine kinase">
    <location>
        <begin position="1"/>
        <end position="310"/>
    </location>
</feature>
<feature type="binding site" evidence="1">
    <location>
        <begin position="91"/>
        <end position="101"/>
    </location>
    <ligand>
        <name>ATP</name>
        <dbReference type="ChEBI" id="CHEBI:30616"/>
    </ligand>
</feature>
<gene>
    <name evidence="1" type="primary">thrB</name>
    <name type="ordered locus">Z0003</name>
    <name type="ordered locus">ECs0003</name>
</gene>
<comment type="function">
    <text evidence="1">Catalyzes the ATP-dependent phosphorylation of L-homoserine to L-homoserine phosphate.</text>
</comment>
<comment type="catalytic activity">
    <reaction evidence="1">
        <text>L-homoserine + ATP = O-phospho-L-homoserine + ADP + H(+)</text>
        <dbReference type="Rhea" id="RHEA:13985"/>
        <dbReference type="ChEBI" id="CHEBI:15378"/>
        <dbReference type="ChEBI" id="CHEBI:30616"/>
        <dbReference type="ChEBI" id="CHEBI:57476"/>
        <dbReference type="ChEBI" id="CHEBI:57590"/>
        <dbReference type="ChEBI" id="CHEBI:456216"/>
        <dbReference type="EC" id="2.7.1.39"/>
    </reaction>
</comment>
<comment type="pathway">
    <text evidence="1">Amino-acid biosynthesis; L-threonine biosynthesis; L-threonine from L-aspartate: step 4/5.</text>
</comment>
<comment type="subcellular location">
    <subcellularLocation>
        <location evidence="1">Cytoplasm</location>
    </subcellularLocation>
</comment>
<comment type="similarity">
    <text evidence="1">Belongs to the GHMP kinase family. Homoserine kinase subfamily.</text>
</comment>
<sequence>MVKVYAPASSANMSVGFDVLGAAVTPVDGALLGDVVTVESAETFSLNNLGRFADKLPSEPRENIVYQCWERFCQELGKQIPVAMTLEKNMPIGSGLGSSACSVVAALMAMNEHCGKPLNDTRLLALMGELEGRISGSIHYDNVAPCFLGGMQLMIEENDIISQQVPGFDEWLWVLAYPGIKVSTAEARAILPAQYRRQDCIAHGRHLAGFIHACYSRQPELAAKLMKDVIAEPYRERLLPGFRQARQAVAEIGAVASGISGSGPTLFALCDKPDTAQRVADWLGKNYLQNQEGFVHICRLDTAGARVLEN</sequence>
<name>KHSE_ECO57</name>